<comment type="function">
    <text evidence="1">Methyltransferase required for the conversion of demethylmenaquinol (DMKH2) to menaquinol (MKH2).</text>
</comment>
<comment type="catalytic activity">
    <reaction evidence="1">
        <text>a 2-demethylmenaquinol + S-adenosyl-L-methionine = a menaquinol + S-adenosyl-L-homocysteine + H(+)</text>
        <dbReference type="Rhea" id="RHEA:42640"/>
        <dbReference type="Rhea" id="RHEA-COMP:9539"/>
        <dbReference type="Rhea" id="RHEA-COMP:9563"/>
        <dbReference type="ChEBI" id="CHEBI:15378"/>
        <dbReference type="ChEBI" id="CHEBI:18151"/>
        <dbReference type="ChEBI" id="CHEBI:55437"/>
        <dbReference type="ChEBI" id="CHEBI:57856"/>
        <dbReference type="ChEBI" id="CHEBI:59789"/>
        <dbReference type="EC" id="2.1.1.163"/>
    </reaction>
</comment>
<comment type="pathway">
    <text evidence="1">Quinol/quinone metabolism; menaquinone biosynthesis; menaquinol from 1,4-dihydroxy-2-naphthoate: step 2/2.</text>
</comment>
<comment type="similarity">
    <text evidence="1">Belongs to the class I-like SAM-binding methyltransferase superfamily. MenG/UbiE family.</text>
</comment>
<protein>
    <recommendedName>
        <fullName evidence="1">Demethylmenaquinone methyltransferase</fullName>
        <ecNumber evidence="1">2.1.1.163</ecNumber>
    </recommendedName>
</protein>
<name>MENG_PAEAT</name>
<reference key="1">
    <citation type="journal article" date="2006" name="PLoS Genet.">
        <title>Secrets of soil survival revealed by the genome sequence of Arthrobacter aurescens TC1.</title>
        <authorList>
            <person name="Mongodin E.F."/>
            <person name="Shapir N."/>
            <person name="Daugherty S.C."/>
            <person name="DeBoy R.T."/>
            <person name="Emerson J.B."/>
            <person name="Shvartzbeyn A."/>
            <person name="Radune D."/>
            <person name="Vamathevan J."/>
            <person name="Riggs F."/>
            <person name="Grinberg V."/>
            <person name="Khouri H.M."/>
            <person name="Wackett L.P."/>
            <person name="Nelson K.E."/>
            <person name="Sadowsky M.J."/>
        </authorList>
    </citation>
    <scope>NUCLEOTIDE SEQUENCE [LARGE SCALE GENOMIC DNA]</scope>
    <source>
        <strain>TC1</strain>
    </source>
</reference>
<organism>
    <name type="scientific">Paenarthrobacter aurescens (strain TC1)</name>
    <dbReference type="NCBI Taxonomy" id="290340"/>
    <lineage>
        <taxon>Bacteria</taxon>
        <taxon>Bacillati</taxon>
        <taxon>Actinomycetota</taxon>
        <taxon>Actinomycetes</taxon>
        <taxon>Micrococcales</taxon>
        <taxon>Micrococcaceae</taxon>
        <taxon>Paenarthrobacter</taxon>
    </lineage>
</organism>
<dbReference type="EC" id="2.1.1.163" evidence="1"/>
<dbReference type="EMBL" id="CP000474">
    <property type="protein sequence ID" value="ABM07533.1"/>
    <property type="molecule type" value="Genomic_DNA"/>
</dbReference>
<dbReference type="SMR" id="A1R990"/>
<dbReference type="STRING" id="290340.AAur_3102"/>
<dbReference type="KEGG" id="aau:AAur_3102"/>
<dbReference type="eggNOG" id="COG2226">
    <property type="taxonomic scope" value="Bacteria"/>
</dbReference>
<dbReference type="HOGENOM" id="CLU_037990_0_0_11"/>
<dbReference type="OrthoDB" id="9808140at2"/>
<dbReference type="UniPathway" id="UPA00079">
    <property type="reaction ID" value="UER00169"/>
</dbReference>
<dbReference type="Proteomes" id="UP000000637">
    <property type="component" value="Chromosome"/>
</dbReference>
<dbReference type="GO" id="GO:0043770">
    <property type="term" value="F:demethylmenaquinone methyltransferase activity"/>
    <property type="evidence" value="ECO:0007669"/>
    <property type="project" value="UniProtKB-UniRule"/>
</dbReference>
<dbReference type="GO" id="GO:0009234">
    <property type="term" value="P:menaquinone biosynthetic process"/>
    <property type="evidence" value="ECO:0007669"/>
    <property type="project" value="UniProtKB-UniRule"/>
</dbReference>
<dbReference type="GO" id="GO:0032259">
    <property type="term" value="P:methylation"/>
    <property type="evidence" value="ECO:0007669"/>
    <property type="project" value="UniProtKB-KW"/>
</dbReference>
<dbReference type="CDD" id="cd02440">
    <property type="entry name" value="AdoMet_MTases"/>
    <property type="match status" value="1"/>
</dbReference>
<dbReference type="Gene3D" id="3.40.50.150">
    <property type="entry name" value="Vaccinia Virus protein VP39"/>
    <property type="match status" value="1"/>
</dbReference>
<dbReference type="HAMAP" id="MF_01813">
    <property type="entry name" value="MenG_UbiE_methyltr"/>
    <property type="match status" value="1"/>
</dbReference>
<dbReference type="InterPro" id="IPR029063">
    <property type="entry name" value="SAM-dependent_MTases_sf"/>
</dbReference>
<dbReference type="InterPro" id="IPR004033">
    <property type="entry name" value="UbiE/COQ5_MeTrFase"/>
</dbReference>
<dbReference type="InterPro" id="IPR023576">
    <property type="entry name" value="UbiE/COQ5_MeTrFase_CS"/>
</dbReference>
<dbReference type="NCBIfam" id="TIGR01934">
    <property type="entry name" value="MenG_MenH_UbiE"/>
    <property type="match status" value="1"/>
</dbReference>
<dbReference type="NCBIfam" id="NF001241">
    <property type="entry name" value="PRK00216.1-2"/>
    <property type="match status" value="1"/>
</dbReference>
<dbReference type="PANTHER" id="PTHR43591:SF24">
    <property type="entry name" value="2-METHOXY-6-POLYPRENYL-1,4-BENZOQUINOL METHYLASE, MITOCHONDRIAL"/>
    <property type="match status" value="1"/>
</dbReference>
<dbReference type="PANTHER" id="PTHR43591">
    <property type="entry name" value="METHYLTRANSFERASE"/>
    <property type="match status" value="1"/>
</dbReference>
<dbReference type="Pfam" id="PF01209">
    <property type="entry name" value="Ubie_methyltran"/>
    <property type="match status" value="1"/>
</dbReference>
<dbReference type="SUPFAM" id="SSF53335">
    <property type="entry name" value="S-adenosyl-L-methionine-dependent methyltransferases"/>
    <property type="match status" value="1"/>
</dbReference>
<dbReference type="PROSITE" id="PS51608">
    <property type="entry name" value="SAM_MT_UBIE"/>
    <property type="match status" value="1"/>
</dbReference>
<dbReference type="PROSITE" id="PS01184">
    <property type="entry name" value="UBIE_2"/>
    <property type="match status" value="1"/>
</dbReference>
<accession>A1R990</accession>
<sequence>MNRASLEKRPDEVATMFDDVAPKYDVVNDVLSMGQTRRWRRIVVDAMDVKVGQKVLDLAAGTGTSSEPYADAGVDVVACDFSLGMLKVGKRRRPDIDFIAGDATNLPFADNSFDASTISFGLRNVVEPRKALEEMLRVTKPGGRLVIAEFSHPVVPLWRNLYTEYLMRALPAIATKVSSNPDAYVYLAESIRAWPDQDHLAQWLSDAGWTDITYRNLSGGIVAVHRAQKPDEHRESVPVAKLRRQIKPRHQAG</sequence>
<keyword id="KW-0474">Menaquinone biosynthesis</keyword>
<keyword id="KW-0489">Methyltransferase</keyword>
<keyword id="KW-0949">S-adenosyl-L-methionine</keyword>
<keyword id="KW-0808">Transferase</keyword>
<gene>
    <name evidence="1" type="primary">menG</name>
    <name type="ordered locus">AAur_3102</name>
</gene>
<feature type="chain" id="PRO_1000056215" description="Demethylmenaquinone methyltransferase">
    <location>
        <begin position="1"/>
        <end position="253"/>
    </location>
</feature>
<feature type="binding site" evidence="1">
    <location>
        <position position="62"/>
    </location>
    <ligand>
        <name>S-adenosyl-L-methionine</name>
        <dbReference type="ChEBI" id="CHEBI:59789"/>
    </ligand>
</feature>
<feature type="binding site" evidence="1">
    <location>
        <position position="80"/>
    </location>
    <ligand>
        <name>S-adenosyl-L-methionine</name>
        <dbReference type="ChEBI" id="CHEBI:59789"/>
    </ligand>
</feature>
<feature type="binding site" evidence="1">
    <location>
        <begin position="102"/>
        <end position="103"/>
    </location>
    <ligand>
        <name>S-adenosyl-L-methionine</name>
        <dbReference type="ChEBI" id="CHEBI:59789"/>
    </ligand>
</feature>
<feature type="binding site" evidence="1">
    <location>
        <position position="119"/>
    </location>
    <ligand>
        <name>S-adenosyl-L-methionine</name>
        <dbReference type="ChEBI" id="CHEBI:59789"/>
    </ligand>
</feature>
<evidence type="ECO:0000255" key="1">
    <source>
        <dbReference type="HAMAP-Rule" id="MF_01813"/>
    </source>
</evidence>
<proteinExistence type="inferred from homology"/>